<gene>
    <name type="primary">icd</name>
    <name type="synonym">citC</name>
    <name type="ordered locus">SAV1694</name>
</gene>
<feature type="chain" id="PRO_0000083560" description="Isocitrate dehydrogenase [NADP]">
    <location>
        <begin position="1"/>
        <end position="422"/>
    </location>
</feature>
<feature type="binding site" evidence="1">
    <location>
        <position position="94"/>
    </location>
    <ligand>
        <name>NADP(+)</name>
        <dbReference type="ChEBI" id="CHEBI:58349"/>
    </ligand>
</feature>
<feature type="binding site" evidence="1">
    <location>
        <position position="103"/>
    </location>
    <ligand>
        <name>D-threo-isocitrate</name>
        <dbReference type="ChEBI" id="CHEBI:15562"/>
    </ligand>
</feature>
<feature type="binding site" evidence="1">
    <location>
        <position position="105"/>
    </location>
    <ligand>
        <name>D-threo-isocitrate</name>
        <dbReference type="ChEBI" id="CHEBI:15562"/>
    </ligand>
</feature>
<feature type="binding site" evidence="1">
    <location>
        <position position="109"/>
    </location>
    <ligand>
        <name>D-threo-isocitrate</name>
        <dbReference type="ChEBI" id="CHEBI:15562"/>
    </ligand>
</feature>
<feature type="binding site" evidence="1">
    <location>
        <position position="119"/>
    </location>
    <ligand>
        <name>D-threo-isocitrate</name>
        <dbReference type="ChEBI" id="CHEBI:15562"/>
    </ligand>
</feature>
<feature type="binding site" evidence="1">
    <location>
        <position position="143"/>
    </location>
    <ligand>
        <name>D-threo-isocitrate</name>
        <dbReference type="ChEBI" id="CHEBI:15562"/>
    </ligand>
</feature>
<feature type="binding site" evidence="1">
    <location>
        <position position="310"/>
    </location>
    <ligand>
        <name>Mg(2+)</name>
        <dbReference type="ChEBI" id="CHEBI:18420"/>
    </ligand>
</feature>
<feature type="binding site" evidence="1">
    <location>
        <begin position="344"/>
        <end position="350"/>
    </location>
    <ligand>
        <name>NADP(+)</name>
        <dbReference type="ChEBI" id="CHEBI:58349"/>
    </ligand>
</feature>
<feature type="binding site" evidence="1">
    <location>
        <position position="357"/>
    </location>
    <ligand>
        <name>NADP(+)</name>
        <dbReference type="ChEBI" id="CHEBI:58349"/>
    </ligand>
</feature>
<feature type="binding site" evidence="1">
    <location>
        <position position="396"/>
    </location>
    <ligand>
        <name>NADP(+)</name>
        <dbReference type="ChEBI" id="CHEBI:58349"/>
    </ligand>
</feature>
<feature type="binding site" evidence="1">
    <location>
        <position position="400"/>
    </location>
    <ligand>
        <name>NADP(+)</name>
        <dbReference type="ChEBI" id="CHEBI:58349"/>
    </ligand>
</feature>
<feature type="site" description="Critical for catalysis" evidence="1">
    <location>
        <position position="150"/>
    </location>
</feature>
<feature type="site" description="Critical for catalysis" evidence="1">
    <location>
        <position position="220"/>
    </location>
</feature>
<organism>
    <name type="scientific">Staphylococcus aureus (strain Mu50 / ATCC 700699)</name>
    <dbReference type="NCBI Taxonomy" id="158878"/>
    <lineage>
        <taxon>Bacteria</taxon>
        <taxon>Bacillati</taxon>
        <taxon>Bacillota</taxon>
        <taxon>Bacilli</taxon>
        <taxon>Bacillales</taxon>
        <taxon>Staphylococcaceae</taxon>
        <taxon>Staphylococcus</taxon>
    </lineage>
</organism>
<dbReference type="EC" id="1.1.1.42" evidence="1"/>
<dbReference type="EMBL" id="BA000017">
    <property type="protein sequence ID" value="BAB57856.1"/>
    <property type="molecule type" value="Genomic_DNA"/>
</dbReference>
<dbReference type="RefSeq" id="WP_000123165.1">
    <property type="nucleotide sequence ID" value="NC_002758.2"/>
</dbReference>
<dbReference type="SMR" id="P65099"/>
<dbReference type="KEGG" id="sav:SAV1694"/>
<dbReference type="HOGENOM" id="CLU_031953_7_1_9"/>
<dbReference type="PhylomeDB" id="P65099"/>
<dbReference type="Proteomes" id="UP000002481">
    <property type="component" value="Chromosome"/>
</dbReference>
<dbReference type="GO" id="GO:0004450">
    <property type="term" value="F:isocitrate dehydrogenase (NADP+) activity"/>
    <property type="evidence" value="ECO:0007669"/>
    <property type="project" value="UniProtKB-EC"/>
</dbReference>
<dbReference type="GO" id="GO:0000287">
    <property type="term" value="F:magnesium ion binding"/>
    <property type="evidence" value="ECO:0007669"/>
    <property type="project" value="InterPro"/>
</dbReference>
<dbReference type="GO" id="GO:0051287">
    <property type="term" value="F:NAD binding"/>
    <property type="evidence" value="ECO:0007669"/>
    <property type="project" value="InterPro"/>
</dbReference>
<dbReference type="GO" id="GO:0006097">
    <property type="term" value="P:glyoxylate cycle"/>
    <property type="evidence" value="ECO:0007669"/>
    <property type="project" value="UniProtKB-KW"/>
</dbReference>
<dbReference type="GO" id="GO:0006099">
    <property type="term" value="P:tricarboxylic acid cycle"/>
    <property type="evidence" value="ECO:0007669"/>
    <property type="project" value="UniProtKB-KW"/>
</dbReference>
<dbReference type="Gene3D" id="3.40.718.10">
    <property type="entry name" value="Isopropylmalate Dehydrogenase"/>
    <property type="match status" value="1"/>
</dbReference>
<dbReference type="InterPro" id="IPR019818">
    <property type="entry name" value="IsoCit/isopropylmalate_DH_CS"/>
</dbReference>
<dbReference type="InterPro" id="IPR004439">
    <property type="entry name" value="Isocitrate_DH_NADP_dimer_prok"/>
</dbReference>
<dbReference type="InterPro" id="IPR024084">
    <property type="entry name" value="IsoPropMal-DH-like_dom"/>
</dbReference>
<dbReference type="NCBIfam" id="NF005425">
    <property type="entry name" value="PRK07006.1"/>
    <property type="match status" value="1"/>
</dbReference>
<dbReference type="NCBIfam" id="TIGR00183">
    <property type="entry name" value="prok_nadp_idh"/>
    <property type="match status" value="1"/>
</dbReference>
<dbReference type="PANTHER" id="PTHR43504">
    <property type="entry name" value="ISOCITRATE DEHYDROGENASE [NADP]"/>
    <property type="match status" value="1"/>
</dbReference>
<dbReference type="PANTHER" id="PTHR43504:SF1">
    <property type="entry name" value="ISOCITRATE DEHYDROGENASE [NADP]"/>
    <property type="match status" value="1"/>
</dbReference>
<dbReference type="Pfam" id="PF00180">
    <property type="entry name" value="Iso_dh"/>
    <property type="match status" value="1"/>
</dbReference>
<dbReference type="SMART" id="SM01329">
    <property type="entry name" value="Iso_dh"/>
    <property type="match status" value="1"/>
</dbReference>
<dbReference type="SUPFAM" id="SSF53659">
    <property type="entry name" value="Isocitrate/Isopropylmalate dehydrogenase-like"/>
    <property type="match status" value="1"/>
</dbReference>
<dbReference type="PROSITE" id="PS00470">
    <property type="entry name" value="IDH_IMDH"/>
    <property type="match status" value="1"/>
</dbReference>
<name>IDH_STAAM</name>
<accession>P65099</accession>
<accession>Q99TG8</accession>
<protein>
    <recommendedName>
        <fullName>Isocitrate dehydrogenase [NADP]</fullName>
        <shortName>IDH</shortName>
        <ecNumber evidence="1">1.1.1.42</ecNumber>
    </recommendedName>
    <alternativeName>
        <fullName>IDP</fullName>
    </alternativeName>
    <alternativeName>
        <fullName>NADP(+)-specific ICDH</fullName>
    </alternativeName>
    <alternativeName>
        <fullName>Oxalosuccinate decarboxylase</fullName>
    </alternativeName>
</protein>
<keyword id="KW-0329">Glyoxylate bypass</keyword>
<keyword id="KW-0460">Magnesium</keyword>
<keyword id="KW-0464">Manganese</keyword>
<keyword id="KW-0479">Metal-binding</keyword>
<keyword id="KW-0521">NADP</keyword>
<keyword id="KW-0560">Oxidoreductase</keyword>
<keyword id="KW-0816">Tricarboxylic acid cycle</keyword>
<comment type="function">
    <text evidence="1">Catalyzes the oxidative decarboxylation of isocitrate to 2-oxoglutarate and carbon dioxide with the concomitant reduction of NADP(+).</text>
</comment>
<comment type="catalytic activity">
    <reaction evidence="1">
        <text>D-threo-isocitrate + NADP(+) = 2-oxoglutarate + CO2 + NADPH</text>
        <dbReference type="Rhea" id="RHEA:19629"/>
        <dbReference type="ChEBI" id="CHEBI:15562"/>
        <dbReference type="ChEBI" id="CHEBI:16526"/>
        <dbReference type="ChEBI" id="CHEBI:16810"/>
        <dbReference type="ChEBI" id="CHEBI:57783"/>
        <dbReference type="ChEBI" id="CHEBI:58349"/>
        <dbReference type="EC" id="1.1.1.42"/>
    </reaction>
</comment>
<comment type="cofactor">
    <cofactor evidence="1">
        <name>Mg(2+)</name>
        <dbReference type="ChEBI" id="CHEBI:18420"/>
    </cofactor>
    <cofactor evidence="1">
        <name>Mn(2+)</name>
        <dbReference type="ChEBI" id="CHEBI:29035"/>
    </cofactor>
    <text evidence="1">Binds 1 Mg(2+) or Mn(2+) ion per subunit.</text>
</comment>
<comment type="subunit">
    <text evidence="1">Homodimer.</text>
</comment>
<comment type="similarity">
    <text evidence="2">Belongs to the isocitrate and isopropylmalate dehydrogenases family.</text>
</comment>
<reference key="1">
    <citation type="journal article" date="2001" name="Lancet">
        <title>Whole genome sequencing of meticillin-resistant Staphylococcus aureus.</title>
        <authorList>
            <person name="Kuroda M."/>
            <person name="Ohta T."/>
            <person name="Uchiyama I."/>
            <person name="Baba T."/>
            <person name="Yuzawa H."/>
            <person name="Kobayashi I."/>
            <person name="Cui L."/>
            <person name="Oguchi A."/>
            <person name="Aoki K."/>
            <person name="Nagai Y."/>
            <person name="Lian J.-Q."/>
            <person name="Ito T."/>
            <person name="Kanamori M."/>
            <person name="Matsumaru H."/>
            <person name="Maruyama A."/>
            <person name="Murakami H."/>
            <person name="Hosoyama A."/>
            <person name="Mizutani-Ui Y."/>
            <person name="Takahashi N.K."/>
            <person name="Sawano T."/>
            <person name="Inoue R."/>
            <person name="Kaito C."/>
            <person name="Sekimizu K."/>
            <person name="Hirakawa H."/>
            <person name="Kuhara S."/>
            <person name="Goto S."/>
            <person name="Yabuzaki J."/>
            <person name="Kanehisa M."/>
            <person name="Yamashita A."/>
            <person name="Oshima K."/>
            <person name="Furuya K."/>
            <person name="Yoshino C."/>
            <person name="Shiba T."/>
            <person name="Hattori M."/>
            <person name="Ogasawara N."/>
            <person name="Hayashi H."/>
            <person name="Hiramatsu K."/>
        </authorList>
    </citation>
    <scope>NUCLEOTIDE SEQUENCE [LARGE SCALE GENOMIC DNA]</scope>
    <source>
        <strain>Mu50 / ATCC 700699</strain>
    </source>
</reference>
<sequence length="422" mass="46423">MTAEKITQGTEGLNVPNEPIIPFIIGDGIGPDIWKAASRVIDAAVEKAYNGEKRIEWKEVLAGQKAFDTTGEWLPQETLDTIKEYLIAVKGPLTTPIGGGIRSLNVALRQELDLFTCLRPVRWFKGVPSPVKRPQDVDMVIFRENTEDIYAGIEFKEGTTEVKKVIDFLQNEMGATNIRFPETSGIGIKPVSKEGTERLVRAAIQYAIDNNRKSVTLVHKGNIMKFTEGSFKQWGYDLALSEFGDQVFTWQQYDEIVENEGRDAANAAQEKAEKEGKIIIKDSIADIFLQQILTRPAEHDVVATMNLNGDYISDALAAQVGGIGIAPGANINYETGHAIFEATHGTAPKYAGLNKVNPSSVILSSVLMLEHLGWQEAADKITDSIEDTIASKVVTYDFARLMDGAEEVSTSAFADELIKNLK</sequence>
<evidence type="ECO:0000250" key="1">
    <source>
        <dbReference type="UniProtKB" id="P08200"/>
    </source>
</evidence>
<evidence type="ECO:0000305" key="2"/>
<proteinExistence type="inferred from homology"/>